<sequence length="365" mass="41560">MELSEIRNLLEGYSEKINGFRDSLDLDRLEEEIALLENDMAQPEFWNDQAAAQKVIDESNALKAKYDNYQAMNNMLEEAQTMLEMLQEEADEDMQVELEEMTTALGQKIESYELEIMLNQPYDHMNAVLEIHPGSGGTESQDWGSMLMRMYTRWGEAHGFKVEILDYQDGDVAGLKSVAIRFVGRNAYGFLRGEKGVHRLVRISPFDSANRRHTSFTSVDVMPELDDSIEVEVRDADVKMDTFRSGGAGGQNVNKVSTGVRLTHVPTGIVVQSTMDRTQYGNRDKAMAMLKSKLYQLEMDKKQAEVDELRGDQSEISWGSQIRSYVFMPYQLVKDTRTGYETGQISNVMDGEIDGFINAYLRWNL</sequence>
<organism>
    <name type="scientific">Lactococcus lactis subsp. cremoris (strain SK11)</name>
    <dbReference type="NCBI Taxonomy" id="272622"/>
    <lineage>
        <taxon>Bacteria</taxon>
        <taxon>Bacillati</taxon>
        <taxon>Bacillota</taxon>
        <taxon>Bacilli</taxon>
        <taxon>Lactobacillales</taxon>
        <taxon>Streptococcaceae</taxon>
        <taxon>Lactococcus</taxon>
        <taxon>Lactococcus cremoris subsp. cremoris</taxon>
    </lineage>
</organism>
<feature type="chain" id="PRO_1000004993" description="Peptide chain release factor 2">
    <location>
        <begin position="1"/>
        <end position="365"/>
    </location>
</feature>
<feature type="modified residue" description="N5-methylglutamine" evidence="1">
    <location>
        <position position="251"/>
    </location>
</feature>
<evidence type="ECO:0000255" key="1">
    <source>
        <dbReference type="HAMAP-Rule" id="MF_00094"/>
    </source>
</evidence>
<comment type="function">
    <text evidence="1">Peptide chain release factor 2 directs the termination of translation in response to the peptide chain termination codons UGA and UAA.</text>
</comment>
<comment type="subcellular location">
    <subcellularLocation>
        <location evidence="1">Cytoplasm</location>
    </subcellularLocation>
</comment>
<comment type="PTM">
    <text evidence="1">Methylated by PrmC. Methylation increases the termination efficiency of RF2.</text>
</comment>
<comment type="similarity">
    <text evidence="1">Belongs to the prokaryotic/mitochondrial release factor family.</text>
</comment>
<name>RF2_LACLS</name>
<protein>
    <recommendedName>
        <fullName evidence="1">Peptide chain release factor 2</fullName>
        <shortName evidence="1">RF-2</shortName>
    </recommendedName>
</protein>
<reference key="1">
    <citation type="journal article" date="2006" name="Proc. Natl. Acad. Sci. U.S.A.">
        <title>Comparative genomics of the lactic acid bacteria.</title>
        <authorList>
            <person name="Makarova K.S."/>
            <person name="Slesarev A."/>
            <person name="Wolf Y.I."/>
            <person name="Sorokin A."/>
            <person name="Mirkin B."/>
            <person name="Koonin E.V."/>
            <person name="Pavlov A."/>
            <person name="Pavlova N."/>
            <person name="Karamychev V."/>
            <person name="Polouchine N."/>
            <person name="Shakhova V."/>
            <person name="Grigoriev I."/>
            <person name="Lou Y."/>
            <person name="Rohksar D."/>
            <person name="Lucas S."/>
            <person name="Huang K."/>
            <person name="Goodstein D.M."/>
            <person name="Hawkins T."/>
            <person name="Plengvidhya V."/>
            <person name="Welker D."/>
            <person name="Hughes J."/>
            <person name="Goh Y."/>
            <person name="Benson A."/>
            <person name="Baldwin K."/>
            <person name="Lee J.-H."/>
            <person name="Diaz-Muniz I."/>
            <person name="Dosti B."/>
            <person name="Smeianov V."/>
            <person name="Wechter W."/>
            <person name="Barabote R."/>
            <person name="Lorca G."/>
            <person name="Altermann E."/>
            <person name="Barrangou R."/>
            <person name="Ganesan B."/>
            <person name="Xie Y."/>
            <person name="Rawsthorne H."/>
            <person name="Tamir D."/>
            <person name="Parker C."/>
            <person name="Breidt F."/>
            <person name="Broadbent J.R."/>
            <person name="Hutkins R."/>
            <person name="O'Sullivan D."/>
            <person name="Steele J."/>
            <person name="Unlu G."/>
            <person name="Saier M.H. Jr."/>
            <person name="Klaenhammer T."/>
            <person name="Richardson P."/>
            <person name="Kozyavkin S."/>
            <person name="Weimer B.C."/>
            <person name="Mills D.A."/>
        </authorList>
    </citation>
    <scope>NUCLEOTIDE SEQUENCE [LARGE SCALE GENOMIC DNA]</scope>
    <source>
        <strain>SK11</strain>
    </source>
</reference>
<keyword id="KW-0963">Cytoplasm</keyword>
<keyword id="KW-0488">Methylation</keyword>
<keyword id="KW-0648">Protein biosynthesis</keyword>
<accession>Q02ZM8</accession>
<gene>
    <name evidence="1" type="primary">prfB</name>
    <name type="ordered locus">LACR_1057</name>
</gene>
<dbReference type="EMBL" id="CP000425">
    <property type="protein sequence ID" value="ABJ72594.1"/>
    <property type="molecule type" value="Genomic_DNA"/>
</dbReference>
<dbReference type="RefSeq" id="WP_011675981.1">
    <property type="nucleotide sequence ID" value="NC_008527.1"/>
</dbReference>
<dbReference type="SMR" id="Q02ZM8"/>
<dbReference type="GeneID" id="61109276"/>
<dbReference type="KEGG" id="llc:LACR_1057"/>
<dbReference type="HOGENOM" id="CLU_036856_6_0_9"/>
<dbReference type="Proteomes" id="UP000000240">
    <property type="component" value="Chromosome"/>
</dbReference>
<dbReference type="GO" id="GO:0005737">
    <property type="term" value="C:cytoplasm"/>
    <property type="evidence" value="ECO:0007669"/>
    <property type="project" value="UniProtKB-SubCell"/>
</dbReference>
<dbReference type="GO" id="GO:0016149">
    <property type="term" value="F:translation release factor activity, codon specific"/>
    <property type="evidence" value="ECO:0007669"/>
    <property type="project" value="UniProtKB-UniRule"/>
</dbReference>
<dbReference type="Gene3D" id="3.30.160.20">
    <property type="match status" value="1"/>
</dbReference>
<dbReference type="Gene3D" id="3.30.70.1660">
    <property type="match status" value="1"/>
</dbReference>
<dbReference type="Gene3D" id="1.20.58.410">
    <property type="entry name" value="Release factor"/>
    <property type="match status" value="1"/>
</dbReference>
<dbReference type="HAMAP" id="MF_00094">
    <property type="entry name" value="Rel_fac_2"/>
    <property type="match status" value="1"/>
</dbReference>
<dbReference type="InterPro" id="IPR005139">
    <property type="entry name" value="PCRF"/>
</dbReference>
<dbReference type="InterPro" id="IPR000352">
    <property type="entry name" value="Pep_chain_release_fac_I"/>
</dbReference>
<dbReference type="InterPro" id="IPR045853">
    <property type="entry name" value="Pep_chain_release_fac_I_sf"/>
</dbReference>
<dbReference type="InterPro" id="IPR004374">
    <property type="entry name" value="PrfB"/>
</dbReference>
<dbReference type="NCBIfam" id="TIGR00020">
    <property type="entry name" value="prfB"/>
    <property type="match status" value="1"/>
</dbReference>
<dbReference type="PANTHER" id="PTHR43116:SF3">
    <property type="entry name" value="CLASS I PEPTIDE CHAIN RELEASE FACTOR"/>
    <property type="match status" value="1"/>
</dbReference>
<dbReference type="PANTHER" id="PTHR43116">
    <property type="entry name" value="PEPTIDE CHAIN RELEASE FACTOR 2"/>
    <property type="match status" value="1"/>
</dbReference>
<dbReference type="Pfam" id="PF03462">
    <property type="entry name" value="PCRF"/>
    <property type="match status" value="1"/>
</dbReference>
<dbReference type="Pfam" id="PF00472">
    <property type="entry name" value="RF-1"/>
    <property type="match status" value="1"/>
</dbReference>
<dbReference type="SMART" id="SM00937">
    <property type="entry name" value="PCRF"/>
    <property type="match status" value="1"/>
</dbReference>
<dbReference type="SUPFAM" id="SSF75620">
    <property type="entry name" value="Release factor"/>
    <property type="match status" value="1"/>
</dbReference>
<dbReference type="PROSITE" id="PS00745">
    <property type="entry name" value="RF_PROK_I"/>
    <property type="match status" value="1"/>
</dbReference>
<proteinExistence type="inferred from homology"/>